<proteinExistence type="inferred from homology"/>
<dbReference type="EC" id="2.5.1.141" evidence="1"/>
<dbReference type="EMBL" id="CP000563">
    <property type="protein sequence ID" value="ABN59681.1"/>
    <property type="molecule type" value="Genomic_DNA"/>
</dbReference>
<dbReference type="RefSeq" id="WP_006079596.1">
    <property type="nucleotide sequence ID" value="NC_009052.1"/>
</dbReference>
<dbReference type="SMR" id="A3CYW8"/>
<dbReference type="STRING" id="325240.Sbal_0147"/>
<dbReference type="GeneID" id="11774295"/>
<dbReference type="KEGG" id="sbl:Sbal_0147"/>
<dbReference type="HOGENOM" id="CLU_029631_0_2_6"/>
<dbReference type="OrthoDB" id="9814417at2"/>
<dbReference type="UniPathway" id="UPA00834">
    <property type="reaction ID" value="UER00712"/>
</dbReference>
<dbReference type="Proteomes" id="UP000001557">
    <property type="component" value="Chromosome"/>
</dbReference>
<dbReference type="GO" id="GO:0005886">
    <property type="term" value="C:plasma membrane"/>
    <property type="evidence" value="ECO:0007669"/>
    <property type="project" value="UniProtKB-SubCell"/>
</dbReference>
<dbReference type="GO" id="GO:0008495">
    <property type="term" value="F:protoheme IX farnesyltransferase activity"/>
    <property type="evidence" value="ECO:0007669"/>
    <property type="project" value="UniProtKB-UniRule"/>
</dbReference>
<dbReference type="GO" id="GO:0048034">
    <property type="term" value="P:heme O biosynthetic process"/>
    <property type="evidence" value="ECO:0007669"/>
    <property type="project" value="UniProtKB-UniRule"/>
</dbReference>
<dbReference type="CDD" id="cd13957">
    <property type="entry name" value="PT_UbiA_Cox10"/>
    <property type="match status" value="1"/>
</dbReference>
<dbReference type="FunFam" id="1.10.357.140:FF:000001">
    <property type="entry name" value="Protoheme IX farnesyltransferase"/>
    <property type="match status" value="1"/>
</dbReference>
<dbReference type="Gene3D" id="1.10.357.140">
    <property type="entry name" value="UbiA prenyltransferase"/>
    <property type="match status" value="1"/>
</dbReference>
<dbReference type="HAMAP" id="MF_00154">
    <property type="entry name" value="CyoE_CtaB"/>
    <property type="match status" value="1"/>
</dbReference>
<dbReference type="InterPro" id="IPR006369">
    <property type="entry name" value="Protohaem_IX_farnesylTrfase"/>
</dbReference>
<dbReference type="InterPro" id="IPR000537">
    <property type="entry name" value="UbiA_prenyltransferase"/>
</dbReference>
<dbReference type="InterPro" id="IPR030470">
    <property type="entry name" value="UbiA_prenylTrfase_CS"/>
</dbReference>
<dbReference type="InterPro" id="IPR044878">
    <property type="entry name" value="UbiA_sf"/>
</dbReference>
<dbReference type="NCBIfam" id="TIGR01473">
    <property type="entry name" value="cyoE_ctaB"/>
    <property type="match status" value="1"/>
</dbReference>
<dbReference type="NCBIfam" id="NF003349">
    <property type="entry name" value="PRK04375.1-2"/>
    <property type="match status" value="1"/>
</dbReference>
<dbReference type="PANTHER" id="PTHR43448:SF7">
    <property type="entry name" value="4-HYDROXYBENZOATE SOLANESYLTRANSFERASE"/>
    <property type="match status" value="1"/>
</dbReference>
<dbReference type="PANTHER" id="PTHR43448">
    <property type="entry name" value="PROTOHEME IX FARNESYLTRANSFERASE, MITOCHONDRIAL"/>
    <property type="match status" value="1"/>
</dbReference>
<dbReference type="Pfam" id="PF01040">
    <property type="entry name" value="UbiA"/>
    <property type="match status" value="1"/>
</dbReference>
<dbReference type="PROSITE" id="PS00943">
    <property type="entry name" value="UBIA"/>
    <property type="match status" value="1"/>
</dbReference>
<name>CYOE_SHEB5</name>
<protein>
    <recommendedName>
        <fullName evidence="1">Protoheme IX farnesyltransferase</fullName>
        <ecNumber evidence="1">2.5.1.141</ecNumber>
    </recommendedName>
    <alternativeName>
        <fullName evidence="1">Heme B farnesyltransferase</fullName>
    </alternativeName>
    <alternativeName>
        <fullName evidence="1">Heme O synthase</fullName>
    </alternativeName>
</protein>
<organism>
    <name type="scientific">Shewanella baltica (strain OS155 / ATCC BAA-1091)</name>
    <dbReference type="NCBI Taxonomy" id="325240"/>
    <lineage>
        <taxon>Bacteria</taxon>
        <taxon>Pseudomonadati</taxon>
        <taxon>Pseudomonadota</taxon>
        <taxon>Gammaproteobacteria</taxon>
        <taxon>Alteromonadales</taxon>
        <taxon>Shewanellaceae</taxon>
        <taxon>Shewanella</taxon>
    </lineage>
</organism>
<feature type="chain" id="PRO_0000326941" description="Protoheme IX farnesyltransferase">
    <location>
        <begin position="1"/>
        <end position="301"/>
    </location>
</feature>
<feature type="transmembrane region" description="Helical" evidence="1">
    <location>
        <begin position="29"/>
        <end position="49"/>
    </location>
</feature>
<feature type="transmembrane region" description="Helical" evidence="1">
    <location>
        <begin position="51"/>
        <end position="71"/>
    </location>
</feature>
<feature type="transmembrane region" description="Helical" evidence="1">
    <location>
        <begin position="101"/>
        <end position="121"/>
    </location>
</feature>
<feature type="transmembrane region" description="Helical" evidence="1">
    <location>
        <begin position="123"/>
        <end position="143"/>
    </location>
</feature>
<feature type="transmembrane region" description="Helical" evidence="1">
    <location>
        <begin position="150"/>
        <end position="170"/>
    </location>
</feature>
<feature type="transmembrane region" description="Helical" evidence="1">
    <location>
        <begin position="177"/>
        <end position="197"/>
    </location>
</feature>
<feature type="transmembrane region" description="Helical" evidence="1">
    <location>
        <begin position="223"/>
        <end position="243"/>
    </location>
</feature>
<feature type="transmembrane region" description="Helical" evidence="1">
    <location>
        <begin position="244"/>
        <end position="264"/>
    </location>
</feature>
<feature type="transmembrane region" description="Helical" evidence="1">
    <location>
        <begin position="274"/>
        <end position="294"/>
    </location>
</feature>
<accession>A3CYW8</accession>
<sequence>MAKPLSITSSLPTFSVTWRAYFEMTKPKVVALMLLTVLVGMCLAVPHAVPVQPLLAGMLGIAMMAGSAAALNHLIDRRIDGLMARTYNRPLPKGRISATRALIFAASLGSLGFIVLYSLVNPLTAWLTFASLIGYALVYTAYLKRATSQNIVIGGLAGAMPPLLGWTAVTNEFHGHALLLVIIIFTWTPPHFWALAIHRRAEYAKVDIPMLPVTHGVEFTKTCILLYTVLLAIACLLPVLVGMCGPVYFVCSSLLSTGFIYKAWQLKYRDHDGLAMQVFRFSIYHLMLLFMALLLDHYLWN</sequence>
<reference key="1">
    <citation type="submission" date="2007-02" db="EMBL/GenBank/DDBJ databases">
        <title>Complete sequence of chromosome of Shewanella baltica OS155.</title>
        <authorList>
            <consortium name="US DOE Joint Genome Institute"/>
            <person name="Copeland A."/>
            <person name="Lucas S."/>
            <person name="Lapidus A."/>
            <person name="Barry K."/>
            <person name="Detter J.C."/>
            <person name="Glavina del Rio T."/>
            <person name="Hammon N."/>
            <person name="Israni S."/>
            <person name="Dalin E."/>
            <person name="Tice H."/>
            <person name="Pitluck S."/>
            <person name="Sims D.R."/>
            <person name="Brettin T."/>
            <person name="Bruce D."/>
            <person name="Han C."/>
            <person name="Tapia R."/>
            <person name="Brainard J."/>
            <person name="Schmutz J."/>
            <person name="Larimer F."/>
            <person name="Land M."/>
            <person name="Hauser L."/>
            <person name="Kyrpides N."/>
            <person name="Mikhailova N."/>
            <person name="Brettar I."/>
            <person name="Klappenbach J."/>
            <person name="Konstantinidis K."/>
            <person name="Rodrigues J."/>
            <person name="Tiedje J."/>
            <person name="Richardson P."/>
        </authorList>
    </citation>
    <scope>NUCLEOTIDE SEQUENCE [LARGE SCALE GENOMIC DNA]</scope>
    <source>
        <strain>OS155 / ATCC BAA-1091</strain>
    </source>
</reference>
<evidence type="ECO:0000255" key="1">
    <source>
        <dbReference type="HAMAP-Rule" id="MF_00154"/>
    </source>
</evidence>
<keyword id="KW-0997">Cell inner membrane</keyword>
<keyword id="KW-1003">Cell membrane</keyword>
<keyword id="KW-0350">Heme biosynthesis</keyword>
<keyword id="KW-0472">Membrane</keyword>
<keyword id="KW-1185">Reference proteome</keyword>
<keyword id="KW-0808">Transferase</keyword>
<keyword id="KW-0812">Transmembrane</keyword>
<keyword id="KW-1133">Transmembrane helix</keyword>
<comment type="function">
    <text evidence="1">Converts heme B (protoheme IX) to heme O by substitution of the vinyl group on carbon 2 of heme B porphyrin ring with a hydroxyethyl farnesyl side group.</text>
</comment>
<comment type="catalytic activity">
    <reaction evidence="1">
        <text>heme b + (2E,6E)-farnesyl diphosphate + H2O = Fe(II)-heme o + diphosphate</text>
        <dbReference type="Rhea" id="RHEA:28070"/>
        <dbReference type="ChEBI" id="CHEBI:15377"/>
        <dbReference type="ChEBI" id="CHEBI:33019"/>
        <dbReference type="ChEBI" id="CHEBI:60344"/>
        <dbReference type="ChEBI" id="CHEBI:60530"/>
        <dbReference type="ChEBI" id="CHEBI:175763"/>
        <dbReference type="EC" id="2.5.1.141"/>
    </reaction>
</comment>
<comment type="pathway">
    <text evidence="1">Porphyrin-containing compound metabolism; heme O biosynthesis; heme O from protoheme: step 1/1.</text>
</comment>
<comment type="subcellular location">
    <subcellularLocation>
        <location evidence="1">Cell inner membrane</location>
        <topology evidence="1">Multi-pass membrane protein</topology>
    </subcellularLocation>
</comment>
<comment type="miscellaneous">
    <text evidence="1">Carbon 2 of the heme B porphyrin ring is defined according to the Fischer nomenclature.</text>
</comment>
<comment type="similarity">
    <text evidence="1">Belongs to the UbiA prenyltransferase family. Protoheme IX farnesyltransferase subfamily.</text>
</comment>
<gene>
    <name evidence="1" type="primary">cyoE</name>
    <name type="ordered locus">Sbal_0147</name>
</gene>